<protein>
    <recommendedName>
        <fullName>L-alanyl-D-glutamate peptidase</fullName>
        <ecNumber>3.4.24.-</ecNumber>
    </recommendedName>
</protein>
<sequence>MALTEAWLIEKANRKLNAGGMYKITSDKTRNVIKKMAKEGIYLCVAQGYRSTAEQNALYAQGRTKPGAIVTNAKGGQSNHNYGVAVDLCLYTNDGKDVIWESTTSRWKKVVAAMKAEGFKWGGDWKSFKDYPHFELCDAVSGEKIPAATQNTNTNSNRYEGKVIDSAPLLPKMDFKSSPFRMYKVGTEFLVYDHNQYWYKTYIDDKLYYMYKSFCDVVAKKDAKGRIKVRIKSAKDLRIPVWNNIKLNSGKIKWYAPNVKLAWYNYRRGYLELWYPNDGWYYTAEYFLK</sequence>
<organismHost>
    <name type="scientific">Listeria monocytogenes</name>
    <dbReference type="NCBI Taxonomy" id="1639"/>
</organismHost>
<comment type="function">
    <text>Cell wall lytic enzyme. Hydrolyzes the link between L-alanine and D-glutamate residues in certain bacterial cell-wall glycopeptides.</text>
</comment>
<comment type="subcellular location">
    <subcellularLocation>
        <location>Secreted</location>
    </subcellularLocation>
</comment>
<comment type="developmental stage">
    <text>Expressed at about 20 minutes after infection.</text>
</comment>
<comment type="similarity">
    <text evidence="1">Belongs to the peptidase M15C family.</text>
</comment>
<evidence type="ECO:0000305" key="1"/>
<evidence type="ECO:0007829" key="2">
    <source>
        <dbReference type="PDB" id="2VO9"/>
    </source>
</evidence>
<evidence type="ECO:0007829" key="3">
    <source>
        <dbReference type="PDB" id="6HX0"/>
    </source>
</evidence>
<name>AEPE_BPA50</name>
<feature type="chain" id="PRO_0000217836" description="L-alanyl-D-glutamate peptidase">
    <location>
        <begin position="1"/>
        <end position="289"/>
    </location>
</feature>
<feature type="helix" evidence="2">
    <location>
        <begin position="5"/>
        <end position="16"/>
    </location>
</feature>
<feature type="helix" evidence="2">
    <location>
        <begin position="23"/>
        <end position="37"/>
    </location>
</feature>
<feature type="turn" evidence="2">
    <location>
        <begin position="38"/>
        <end position="40"/>
    </location>
</feature>
<feature type="strand" evidence="2">
    <location>
        <begin position="43"/>
        <end position="47"/>
    </location>
</feature>
<feature type="helix" evidence="2">
    <location>
        <begin position="52"/>
        <end position="60"/>
    </location>
</feature>
<feature type="turn" evidence="2">
    <location>
        <begin position="61"/>
        <end position="63"/>
    </location>
</feature>
<feature type="strand" evidence="2">
    <location>
        <begin position="64"/>
        <end position="67"/>
    </location>
</feature>
<feature type="helix" evidence="2">
    <location>
        <begin position="79"/>
        <end position="82"/>
    </location>
</feature>
<feature type="strand" evidence="2">
    <location>
        <begin position="85"/>
        <end position="91"/>
    </location>
</feature>
<feature type="strand" evidence="2">
    <location>
        <begin position="95"/>
        <end position="99"/>
    </location>
</feature>
<feature type="strand" evidence="2">
    <location>
        <begin position="102"/>
        <end position="104"/>
    </location>
</feature>
<feature type="helix" evidence="2">
    <location>
        <begin position="105"/>
        <end position="116"/>
    </location>
</feature>
<feature type="helix" evidence="2">
    <location>
        <begin position="122"/>
        <end position="124"/>
    </location>
</feature>
<feature type="strand" evidence="2">
    <location>
        <begin position="125"/>
        <end position="128"/>
    </location>
</feature>
<feature type="strand" evidence="2">
    <location>
        <begin position="133"/>
        <end position="137"/>
    </location>
</feature>
<feature type="helix" evidence="2">
    <location>
        <begin position="139"/>
        <end position="141"/>
    </location>
</feature>
<feature type="strand" evidence="3">
    <location>
        <begin position="158"/>
        <end position="163"/>
    </location>
</feature>
<feature type="strand" evidence="3">
    <location>
        <begin position="165"/>
        <end position="173"/>
    </location>
</feature>
<feature type="strand" evidence="3">
    <location>
        <begin position="180"/>
        <end position="184"/>
    </location>
</feature>
<feature type="strand" evidence="3">
    <location>
        <begin position="188"/>
        <end position="193"/>
    </location>
</feature>
<feature type="strand" evidence="3">
    <location>
        <begin position="195"/>
        <end position="203"/>
    </location>
</feature>
<feature type="strand" evidence="3">
    <location>
        <begin position="206"/>
        <end position="211"/>
    </location>
</feature>
<feature type="helix" evidence="3">
    <location>
        <begin position="212"/>
        <end position="214"/>
    </location>
</feature>
<feature type="strand" evidence="3">
    <location>
        <begin position="215"/>
        <end position="217"/>
    </location>
</feature>
<feature type="strand" evidence="3">
    <location>
        <begin position="227"/>
        <end position="231"/>
    </location>
</feature>
<feature type="turn" evidence="3">
    <location>
        <begin position="234"/>
        <end position="236"/>
    </location>
</feature>
<feature type="strand" evidence="3">
    <location>
        <begin position="239"/>
        <end position="244"/>
    </location>
</feature>
<feature type="strand" evidence="3">
    <location>
        <begin position="248"/>
        <end position="250"/>
    </location>
</feature>
<feature type="strand" evidence="3">
    <location>
        <begin position="252"/>
        <end position="255"/>
    </location>
</feature>
<feature type="strand" evidence="3">
    <location>
        <begin position="260"/>
        <end position="264"/>
    </location>
</feature>
<feature type="strand" evidence="3">
    <location>
        <begin position="267"/>
        <end position="275"/>
    </location>
</feature>
<feature type="turn" evidence="3">
    <location>
        <begin position="276"/>
        <end position="278"/>
    </location>
</feature>
<feature type="strand" evidence="3">
    <location>
        <begin position="279"/>
        <end position="283"/>
    </location>
</feature>
<feature type="turn" evidence="3">
    <location>
        <begin position="285"/>
        <end position="287"/>
    </location>
</feature>
<gene>
    <name type="primary">ply</name>
    <name type="synonym">ply500</name>
</gene>
<keyword id="KW-0002">3D-structure</keyword>
<keyword id="KW-0961">Cell wall biogenesis/degradation</keyword>
<keyword id="KW-0378">Hydrolase</keyword>
<keyword id="KW-0964">Secreted</keyword>
<dbReference type="EC" id="3.4.24.-"/>
<dbReference type="EMBL" id="X85009">
    <property type="protein sequence ID" value="CAA59365.1"/>
    <property type="molecule type" value="Genomic_DNA"/>
</dbReference>
<dbReference type="PIR" id="S69801">
    <property type="entry name" value="S69801"/>
</dbReference>
<dbReference type="RefSeq" id="YP_001468411.1">
    <property type="nucleotide sequence ID" value="NC_009810.1"/>
</dbReference>
<dbReference type="PDB" id="2VO9">
    <property type="method" value="X-ray"/>
    <property type="resolution" value="1.80 A"/>
    <property type="chains" value="A/B/C=1-167"/>
</dbReference>
<dbReference type="PDB" id="6HX0">
    <property type="method" value="X-ray"/>
    <property type="resolution" value="1.59 A"/>
    <property type="chains" value="A=133-289"/>
</dbReference>
<dbReference type="PDBsum" id="2VO9"/>
<dbReference type="PDBsum" id="6HX0"/>
<dbReference type="SMR" id="Q37979"/>
<dbReference type="MEROPS" id="M15.021"/>
<dbReference type="GeneID" id="5601386"/>
<dbReference type="KEGG" id="vg:5601386"/>
<dbReference type="OrthoDB" id="4264at10239"/>
<dbReference type="EvolutionaryTrace" id="Q37979"/>
<dbReference type="GO" id="GO:0005576">
    <property type="term" value="C:extracellular region"/>
    <property type="evidence" value="ECO:0007669"/>
    <property type="project" value="UniProtKB-SubCell"/>
</dbReference>
<dbReference type="GO" id="GO:0008233">
    <property type="term" value="F:peptidase activity"/>
    <property type="evidence" value="ECO:0007669"/>
    <property type="project" value="InterPro"/>
</dbReference>
<dbReference type="GO" id="GO:0071555">
    <property type="term" value="P:cell wall organization"/>
    <property type="evidence" value="ECO:0007669"/>
    <property type="project" value="UniProtKB-KW"/>
</dbReference>
<dbReference type="CDD" id="cd14845">
    <property type="entry name" value="L-Ala-D-Glu_peptidase_like"/>
    <property type="match status" value="1"/>
</dbReference>
<dbReference type="Gene3D" id="3.30.1380.10">
    <property type="match status" value="1"/>
</dbReference>
<dbReference type="Gene3D" id="2.30.30.40">
    <property type="entry name" value="SH3 Domains"/>
    <property type="match status" value="2"/>
</dbReference>
<dbReference type="InterPro" id="IPR009045">
    <property type="entry name" value="Hedgehog_sig/DD-Pept_Zn-bd_sf"/>
</dbReference>
<dbReference type="InterPro" id="IPR039561">
    <property type="entry name" value="Peptidase_M15C"/>
</dbReference>
<dbReference type="InterPro" id="IPR041341">
    <property type="entry name" value="PSA_CBD"/>
</dbReference>
<dbReference type="Pfam" id="PF13539">
    <property type="entry name" value="Peptidase_M15_4"/>
    <property type="match status" value="1"/>
</dbReference>
<dbReference type="Pfam" id="PF18341">
    <property type="entry name" value="PSA_CBD"/>
    <property type="match status" value="2"/>
</dbReference>
<dbReference type="SUPFAM" id="SSF55166">
    <property type="entry name" value="Hedgehog/DD-peptidase"/>
    <property type="match status" value="1"/>
</dbReference>
<dbReference type="SUPFAM" id="SSF82057">
    <property type="entry name" value="Prokaryotic SH3-related domain"/>
    <property type="match status" value="1"/>
</dbReference>
<reference key="1">
    <citation type="journal article" date="1995" name="Mol. Microbiol.">
        <title>Heterogeneous endolysins in Listeria monocytogenes bacteriophages: a new class of enzymes and evidence for conserved holin genes within the siphoviral lysis cassettes.</title>
        <authorList>
            <person name="Loessner M.J."/>
            <person name="Wendlinger G."/>
            <person name="Scherer S."/>
        </authorList>
    </citation>
    <scope>NUCLEOTIDE SEQUENCE [GENOMIC DNA]</scope>
</reference>
<proteinExistence type="evidence at protein level"/>
<accession>Q37979</accession>
<organism>
    <name type="scientific">Listeria phage A500</name>
    <name type="common">Bacteriophage A500</name>
    <dbReference type="NCBI Taxonomy" id="40522"/>
    <lineage>
        <taxon>Viruses</taxon>
        <taxon>Duplodnaviria</taxon>
        <taxon>Heunggongvirae</taxon>
        <taxon>Uroviricota</taxon>
        <taxon>Caudoviricetes</taxon>
    </lineage>
</organism>